<dbReference type="EC" id="2.1.1.-"/>
<dbReference type="EMBL" id="AE004092">
    <property type="protein sequence ID" value="AAK34177.1"/>
    <property type="molecule type" value="Genomic_DNA"/>
</dbReference>
<dbReference type="EMBL" id="CP000017">
    <property type="protein sequence ID" value="AAZ51716.1"/>
    <property type="status" value="ALT_INIT"/>
    <property type="molecule type" value="Genomic_DNA"/>
</dbReference>
<dbReference type="RefSeq" id="NP_269456.1">
    <property type="nucleotide sequence ID" value="NC_002737.2"/>
</dbReference>
<dbReference type="SMR" id="Q99Z86"/>
<dbReference type="PaxDb" id="1314-HKU360_01131"/>
<dbReference type="KEGG" id="spy:SPy_1346"/>
<dbReference type="KEGG" id="spz:M5005_Spy1098"/>
<dbReference type="PATRIC" id="fig|160490.10.peg.1176"/>
<dbReference type="HOGENOM" id="CLU_014689_7_0_9"/>
<dbReference type="OMA" id="GGCKWQH"/>
<dbReference type="Proteomes" id="UP000000750">
    <property type="component" value="Chromosome"/>
</dbReference>
<dbReference type="GO" id="GO:0070041">
    <property type="term" value="F:rRNA (uridine-C5-)-methyltransferase activity"/>
    <property type="evidence" value="ECO:0007669"/>
    <property type="project" value="TreeGrafter"/>
</dbReference>
<dbReference type="GO" id="GO:0070475">
    <property type="term" value="P:rRNA base methylation"/>
    <property type="evidence" value="ECO:0007669"/>
    <property type="project" value="TreeGrafter"/>
</dbReference>
<dbReference type="CDD" id="cd02440">
    <property type="entry name" value="AdoMet_MTases"/>
    <property type="match status" value="1"/>
</dbReference>
<dbReference type="FunFam" id="3.40.50.150:FF:000009">
    <property type="entry name" value="23S rRNA (Uracil(1939)-C(5))-methyltransferase RlmD"/>
    <property type="match status" value="1"/>
</dbReference>
<dbReference type="FunFam" id="2.40.50.1070:FF:000003">
    <property type="entry name" value="23S rRNA (Uracil-5-)-methyltransferase RumA"/>
    <property type="match status" value="1"/>
</dbReference>
<dbReference type="Gene3D" id="2.40.50.1070">
    <property type="match status" value="1"/>
</dbReference>
<dbReference type="Gene3D" id="2.40.50.140">
    <property type="entry name" value="Nucleic acid-binding proteins"/>
    <property type="match status" value="1"/>
</dbReference>
<dbReference type="Gene3D" id="3.40.50.150">
    <property type="entry name" value="Vaccinia Virus protein VP39"/>
    <property type="match status" value="1"/>
</dbReference>
<dbReference type="InterPro" id="IPR030390">
    <property type="entry name" value="MeTrfase_TrmA_AS"/>
</dbReference>
<dbReference type="InterPro" id="IPR030391">
    <property type="entry name" value="MeTrfase_TrmA_CS"/>
</dbReference>
<dbReference type="InterPro" id="IPR012340">
    <property type="entry name" value="NA-bd_OB-fold"/>
</dbReference>
<dbReference type="InterPro" id="IPR029063">
    <property type="entry name" value="SAM-dependent_MTases_sf"/>
</dbReference>
<dbReference type="InterPro" id="IPR002792">
    <property type="entry name" value="TRAM_dom"/>
</dbReference>
<dbReference type="InterPro" id="IPR010280">
    <property type="entry name" value="U5_MeTrfase_fam"/>
</dbReference>
<dbReference type="NCBIfam" id="TIGR00479">
    <property type="entry name" value="rumA"/>
    <property type="match status" value="1"/>
</dbReference>
<dbReference type="PANTHER" id="PTHR11061">
    <property type="entry name" value="RNA M5U METHYLTRANSFERASE"/>
    <property type="match status" value="1"/>
</dbReference>
<dbReference type="PANTHER" id="PTHR11061:SF30">
    <property type="entry name" value="TRNA (URACIL(54)-C(5))-METHYLTRANSFERASE"/>
    <property type="match status" value="1"/>
</dbReference>
<dbReference type="Pfam" id="PF01938">
    <property type="entry name" value="TRAM"/>
    <property type="match status" value="1"/>
</dbReference>
<dbReference type="Pfam" id="PF05958">
    <property type="entry name" value="tRNA_U5-meth_tr"/>
    <property type="match status" value="1"/>
</dbReference>
<dbReference type="SUPFAM" id="SSF50249">
    <property type="entry name" value="Nucleic acid-binding proteins"/>
    <property type="match status" value="1"/>
</dbReference>
<dbReference type="SUPFAM" id="SSF53335">
    <property type="entry name" value="S-adenosyl-L-methionine-dependent methyltransferases"/>
    <property type="match status" value="1"/>
</dbReference>
<dbReference type="PROSITE" id="PS51687">
    <property type="entry name" value="SAM_MT_RNA_M5U"/>
    <property type="match status" value="1"/>
</dbReference>
<dbReference type="PROSITE" id="PS50926">
    <property type="entry name" value="TRAM"/>
    <property type="match status" value="1"/>
</dbReference>
<dbReference type="PROSITE" id="PS01230">
    <property type="entry name" value="TRMA_1"/>
    <property type="match status" value="1"/>
</dbReference>
<dbReference type="PROSITE" id="PS01231">
    <property type="entry name" value="TRMA_2"/>
    <property type="match status" value="1"/>
</dbReference>
<accession>Q99Z86</accession>
<accession>Q48Y56</accession>
<name>Y1346_STRP1</name>
<feature type="chain" id="PRO_0000162035" description="Uncharacterized RNA methyltransferase SPy_1346/M5005_Spy1098">
    <location>
        <begin position="1"/>
        <end position="462"/>
    </location>
</feature>
<feature type="domain" description="TRAM" evidence="1">
    <location>
        <begin position="12"/>
        <end position="70"/>
    </location>
</feature>
<feature type="active site" description="Nucleophile" evidence="2">
    <location>
        <position position="419"/>
    </location>
</feature>
<feature type="binding site" evidence="2">
    <location>
        <position position="294"/>
    </location>
    <ligand>
        <name>S-adenosyl-L-methionine</name>
        <dbReference type="ChEBI" id="CHEBI:59789"/>
    </ligand>
</feature>
<feature type="binding site" evidence="2">
    <location>
        <position position="323"/>
    </location>
    <ligand>
        <name>S-adenosyl-L-methionine</name>
        <dbReference type="ChEBI" id="CHEBI:59789"/>
    </ligand>
</feature>
<feature type="binding site" evidence="2">
    <location>
        <position position="344"/>
    </location>
    <ligand>
        <name>S-adenosyl-L-methionine</name>
        <dbReference type="ChEBI" id="CHEBI:59789"/>
    </ligand>
</feature>
<feature type="binding site" evidence="2">
    <location>
        <position position="392"/>
    </location>
    <ligand>
        <name>S-adenosyl-L-methionine</name>
        <dbReference type="ChEBI" id="CHEBI:59789"/>
    </ligand>
</feature>
<organism>
    <name type="scientific">Streptococcus pyogenes serotype M1</name>
    <dbReference type="NCBI Taxonomy" id="301447"/>
    <lineage>
        <taxon>Bacteria</taxon>
        <taxon>Bacillati</taxon>
        <taxon>Bacillota</taxon>
        <taxon>Bacilli</taxon>
        <taxon>Lactobacillales</taxon>
        <taxon>Streptococcaceae</taxon>
        <taxon>Streptococcus</taxon>
    </lineage>
</organism>
<gene>
    <name type="ordered locus">SPy_1346</name>
    <name type="ordered locus">M5005_Spy1098</name>
</gene>
<protein>
    <recommendedName>
        <fullName>Uncharacterized RNA methyltransferase SPy_1346/M5005_Spy1098</fullName>
        <ecNumber>2.1.1.-</ecNumber>
    </recommendedName>
</protein>
<keyword id="KW-0489">Methyltransferase</keyword>
<keyword id="KW-1185">Reference proteome</keyword>
<keyword id="KW-0949">S-adenosyl-L-methionine</keyword>
<keyword id="KW-0808">Transferase</keyword>
<sequence length="462" mass="51732">MVSPRKGKRIRMLKKNDIIQVAISDLSHEGAGVAKHDGFVFFVDNALPEEVIDMRVLKVNKNSGFGKVEAYHYLSSARNADVNLTYLRTGIADLGHLTYEDQLTFKKKQVQDSLYKIAGISDVTVESTIGMTEPLAYRNKAQVPVRRVNGQLETGFFRKHSHDLIPISDYYIQDKEIDRLINFTRDLLRRFDIKPYDETEQTGLLRNIVVRRGHYSGEMMLVLVTTRPKVFRVDQVIEKIVEAFPAVVSIIQNINDKNTNAIFGKDFKTLYGKDTITDSMLGNNYAISAQSFYQVNTVMAEKLYQTAIAFSDLSKDDIVIDAYSGIGTIGLSFAKTVKAVYGVEVIEAAVRDAQQNAALNGITNAYFVADTAEHAMATWAKDGIKPSVILVDPPRKGLTESFIQASVAMGPQKITYVSCNPATMARDIKRYQELGYKLAKVQPVDLFPQTHHVECVVLLIKE</sequence>
<evidence type="ECO:0000255" key="1">
    <source>
        <dbReference type="PROSITE-ProRule" id="PRU00208"/>
    </source>
</evidence>
<evidence type="ECO:0000255" key="2">
    <source>
        <dbReference type="PROSITE-ProRule" id="PRU01024"/>
    </source>
</evidence>
<evidence type="ECO:0000305" key="3"/>
<proteinExistence type="inferred from homology"/>
<comment type="similarity">
    <text evidence="2">Belongs to the class I-like SAM-binding methyltransferase superfamily. RNA M5U methyltransferase family.</text>
</comment>
<comment type="sequence caution" evidence="3">
    <conflict type="erroneous initiation">
        <sequence resource="EMBL-CDS" id="AAZ51716"/>
    </conflict>
</comment>
<reference key="1">
    <citation type="journal article" date="2001" name="Proc. Natl. Acad. Sci. U.S.A.">
        <title>Complete genome sequence of an M1 strain of Streptococcus pyogenes.</title>
        <authorList>
            <person name="Ferretti J.J."/>
            <person name="McShan W.M."/>
            <person name="Ajdic D.J."/>
            <person name="Savic D.J."/>
            <person name="Savic G."/>
            <person name="Lyon K."/>
            <person name="Primeaux C."/>
            <person name="Sezate S."/>
            <person name="Suvorov A.N."/>
            <person name="Kenton S."/>
            <person name="Lai H.S."/>
            <person name="Lin S.P."/>
            <person name="Qian Y."/>
            <person name="Jia H.G."/>
            <person name="Najar F.Z."/>
            <person name="Ren Q."/>
            <person name="Zhu H."/>
            <person name="Song L."/>
            <person name="White J."/>
            <person name="Yuan X."/>
            <person name="Clifton S.W."/>
            <person name="Roe B.A."/>
            <person name="McLaughlin R.E."/>
        </authorList>
    </citation>
    <scope>NUCLEOTIDE SEQUENCE [LARGE SCALE GENOMIC DNA]</scope>
    <source>
        <strain>ATCC 700294 / SF370 / Serotype M1</strain>
    </source>
</reference>
<reference key="2">
    <citation type="journal article" date="2005" name="J. Infect. Dis.">
        <title>Evolutionary origin and emergence of a highly successful clone of serotype M1 group A Streptococcus involved multiple horizontal gene transfer events.</title>
        <authorList>
            <person name="Sumby P."/>
            <person name="Porcella S.F."/>
            <person name="Madrigal A.G."/>
            <person name="Barbian K.D."/>
            <person name="Virtaneva K."/>
            <person name="Ricklefs S.M."/>
            <person name="Sturdevant D.E."/>
            <person name="Graham M.R."/>
            <person name="Vuopio-Varkila J."/>
            <person name="Hoe N.P."/>
            <person name="Musser J.M."/>
        </authorList>
    </citation>
    <scope>NUCLEOTIDE SEQUENCE [LARGE SCALE GENOMIC DNA]</scope>
    <source>
        <strain>ATCC BAA-947 / MGAS5005 / Serotype M1</strain>
    </source>
</reference>